<organism>
    <name type="scientific">Helicobacter acinonychis (strain Sheeba)</name>
    <dbReference type="NCBI Taxonomy" id="382638"/>
    <lineage>
        <taxon>Bacteria</taxon>
        <taxon>Pseudomonadati</taxon>
        <taxon>Campylobacterota</taxon>
        <taxon>Epsilonproteobacteria</taxon>
        <taxon>Campylobacterales</taxon>
        <taxon>Helicobacteraceae</taxon>
        <taxon>Helicobacter</taxon>
    </lineage>
</organism>
<proteinExistence type="inferred from homology"/>
<protein>
    <recommendedName>
        <fullName evidence="1">tRNA-specific 2-thiouridylase MnmA</fullName>
        <ecNumber evidence="1">2.8.1.13</ecNumber>
    </recommendedName>
</protein>
<accession>Q17Z16</accession>
<gene>
    <name evidence="1" type="primary">mnmA</name>
    <name type="ordered locus">Hac_0264</name>
</gene>
<sequence length="342" mass="38547">MKIAVLLSGGVDSSYSAYNLKEQGHELVGIYLKLHASEKKHDLYIKNAQKACEFLGIPLEVLDFQKDFKSVVYDAFISAYEEGQTPNPCALCNPLMKFGLALDHALKLGCEKIATGHYARIEENDKVSYIREALDKTKDQSYFLYALEHEVIAKLVFPLGDLLKKDIKPLALNAMPFLGTLETYKESQEICFVEKSYIDTLKKHVEVEKEGVVKNLQGKIIGTHKGYMQYTIGKRKGFNIKGALEPHFVVRIDAKKNELVVGKKEDLATHFLKAKNKSLMKDFKSGEYFIKARYRSMPTKAFVSLKDEMIEVELKEPFYGVAKGQALVVYKDDIVLGGGVIV</sequence>
<feature type="chain" id="PRO_0000349658" description="tRNA-specific 2-thiouridylase MnmA">
    <location>
        <begin position="1"/>
        <end position="342"/>
    </location>
</feature>
<feature type="region of interest" description="Interaction with tRNA" evidence="1">
    <location>
        <begin position="138"/>
        <end position="140"/>
    </location>
</feature>
<feature type="region of interest" description="Interaction with tRNA" evidence="1">
    <location>
        <begin position="293"/>
        <end position="294"/>
    </location>
</feature>
<feature type="active site" description="Nucleophile" evidence="1">
    <location>
        <position position="92"/>
    </location>
</feature>
<feature type="active site" description="Cysteine persulfide intermediate" evidence="1">
    <location>
        <position position="191"/>
    </location>
</feature>
<feature type="binding site" evidence="1">
    <location>
        <begin position="6"/>
        <end position="13"/>
    </location>
    <ligand>
        <name>ATP</name>
        <dbReference type="ChEBI" id="CHEBI:30616"/>
    </ligand>
</feature>
<feature type="binding site" evidence="1">
    <location>
        <position position="32"/>
    </location>
    <ligand>
        <name>ATP</name>
        <dbReference type="ChEBI" id="CHEBI:30616"/>
    </ligand>
</feature>
<feature type="binding site" evidence="1">
    <location>
        <position position="116"/>
    </location>
    <ligand>
        <name>ATP</name>
        <dbReference type="ChEBI" id="CHEBI:30616"/>
    </ligand>
</feature>
<feature type="site" description="Interaction with tRNA" evidence="1">
    <location>
        <position position="117"/>
    </location>
</feature>
<feature type="site" description="Interaction with tRNA" evidence="1">
    <location>
        <position position="325"/>
    </location>
</feature>
<feature type="disulfide bond" description="Alternate" evidence="1">
    <location>
        <begin position="92"/>
        <end position="191"/>
    </location>
</feature>
<keyword id="KW-0067">ATP-binding</keyword>
<keyword id="KW-0963">Cytoplasm</keyword>
<keyword id="KW-1015">Disulfide bond</keyword>
<keyword id="KW-0547">Nucleotide-binding</keyword>
<keyword id="KW-0694">RNA-binding</keyword>
<keyword id="KW-0808">Transferase</keyword>
<keyword id="KW-0819">tRNA processing</keyword>
<keyword id="KW-0820">tRNA-binding</keyword>
<evidence type="ECO:0000255" key="1">
    <source>
        <dbReference type="HAMAP-Rule" id="MF_00144"/>
    </source>
</evidence>
<comment type="function">
    <text evidence="1">Catalyzes the 2-thiolation of uridine at the wobble position (U34) of tRNA, leading to the formation of s(2)U34.</text>
</comment>
<comment type="catalytic activity">
    <reaction evidence="1">
        <text>S-sulfanyl-L-cysteinyl-[protein] + uridine(34) in tRNA + AH2 + ATP = 2-thiouridine(34) in tRNA + L-cysteinyl-[protein] + A + AMP + diphosphate + H(+)</text>
        <dbReference type="Rhea" id="RHEA:47032"/>
        <dbReference type="Rhea" id="RHEA-COMP:10131"/>
        <dbReference type="Rhea" id="RHEA-COMP:11726"/>
        <dbReference type="Rhea" id="RHEA-COMP:11727"/>
        <dbReference type="Rhea" id="RHEA-COMP:11728"/>
        <dbReference type="ChEBI" id="CHEBI:13193"/>
        <dbReference type="ChEBI" id="CHEBI:15378"/>
        <dbReference type="ChEBI" id="CHEBI:17499"/>
        <dbReference type="ChEBI" id="CHEBI:29950"/>
        <dbReference type="ChEBI" id="CHEBI:30616"/>
        <dbReference type="ChEBI" id="CHEBI:33019"/>
        <dbReference type="ChEBI" id="CHEBI:61963"/>
        <dbReference type="ChEBI" id="CHEBI:65315"/>
        <dbReference type="ChEBI" id="CHEBI:87170"/>
        <dbReference type="ChEBI" id="CHEBI:456215"/>
        <dbReference type="EC" id="2.8.1.13"/>
    </reaction>
</comment>
<comment type="subcellular location">
    <subcellularLocation>
        <location evidence="1">Cytoplasm</location>
    </subcellularLocation>
</comment>
<comment type="similarity">
    <text evidence="1">Belongs to the MnmA/TRMU family.</text>
</comment>
<dbReference type="EC" id="2.8.1.13" evidence="1"/>
<dbReference type="EMBL" id="AM260522">
    <property type="protein sequence ID" value="CAJ99110.1"/>
    <property type="molecule type" value="Genomic_DNA"/>
</dbReference>
<dbReference type="RefSeq" id="WP_011577225.1">
    <property type="nucleotide sequence ID" value="NC_008229.1"/>
</dbReference>
<dbReference type="SMR" id="Q17Z16"/>
<dbReference type="STRING" id="382638.Hac_0264"/>
<dbReference type="GeneID" id="31757782"/>
<dbReference type="KEGG" id="hac:Hac_0264"/>
<dbReference type="eggNOG" id="COG0482">
    <property type="taxonomic scope" value="Bacteria"/>
</dbReference>
<dbReference type="HOGENOM" id="CLU_035188_0_0_7"/>
<dbReference type="OrthoDB" id="9800696at2"/>
<dbReference type="BioCyc" id="HACI382638:HAC_RS01180-MONOMER"/>
<dbReference type="Proteomes" id="UP000000775">
    <property type="component" value="Chromosome"/>
</dbReference>
<dbReference type="GO" id="GO:0005737">
    <property type="term" value="C:cytoplasm"/>
    <property type="evidence" value="ECO:0007669"/>
    <property type="project" value="UniProtKB-SubCell"/>
</dbReference>
<dbReference type="GO" id="GO:0005524">
    <property type="term" value="F:ATP binding"/>
    <property type="evidence" value="ECO:0007669"/>
    <property type="project" value="UniProtKB-KW"/>
</dbReference>
<dbReference type="GO" id="GO:0000049">
    <property type="term" value="F:tRNA binding"/>
    <property type="evidence" value="ECO:0007669"/>
    <property type="project" value="UniProtKB-KW"/>
</dbReference>
<dbReference type="GO" id="GO:0103016">
    <property type="term" value="F:tRNA-uridine 2-sulfurtransferase activity"/>
    <property type="evidence" value="ECO:0007669"/>
    <property type="project" value="UniProtKB-EC"/>
</dbReference>
<dbReference type="GO" id="GO:0002143">
    <property type="term" value="P:tRNA wobble position uridine thiolation"/>
    <property type="evidence" value="ECO:0007669"/>
    <property type="project" value="TreeGrafter"/>
</dbReference>
<dbReference type="CDD" id="cd01998">
    <property type="entry name" value="MnmA_TRMU-like"/>
    <property type="match status" value="1"/>
</dbReference>
<dbReference type="FunFam" id="2.30.30.280:FF:000001">
    <property type="entry name" value="tRNA-specific 2-thiouridylase MnmA"/>
    <property type="match status" value="1"/>
</dbReference>
<dbReference type="FunFam" id="3.40.50.620:FF:000323">
    <property type="entry name" value="tRNA-specific 2-thiouridylase MnmA"/>
    <property type="match status" value="1"/>
</dbReference>
<dbReference type="Gene3D" id="2.30.30.280">
    <property type="entry name" value="Adenine nucleotide alpha hydrolases-like domains"/>
    <property type="match status" value="1"/>
</dbReference>
<dbReference type="Gene3D" id="3.40.50.620">
    <property type="entry name" value="HUPs"/>
    <property type="match status" value="1"/>
</dbReference>
<dbReference type="Gene3D" id="2.40.30.10">
    <property type="entry name" value="Translation factors"/>
    <property type="match status" value="1"/>
</dbReference>
<dbReference type="HAMAP" id="MF_00144">
    <property type="entry name" value="tRNA_thiouridyl_MnmA"/>
    <property type="match status" value="1"/>
</dbReference>
<dbReference type="InterPro" id="IPR004506">
    <property type="entry name" value="MnmA-like"/>
</dbReference>
<dbReference type="InterPro" id="IPR046885">
    <property type="entry name" value="MnmA-like_C"/>
</dbReference>
<dbReference type="InterPro" id="IPR046884">
    <property type="entry name" value="MnmA-like_central"/>
</dbReference>
<dbReference type="InterPro" id="IPR023382">
    <property type="entry name" value="MnmA-like_central_sf"/>
</dbReference>
<dbReference type="InterPro" id="IPR014729">
    <property type="entry name" value="Rossmann-like_a/b/a_fold"/>
</dbReference>
<dbReference type="NCBIfam" id="NF001138">
    <property type="entry name" value="PRK00143.1"/>
    <property type="match status" value="1"/>
</dbReference>
<dbReference type="NCBIfam" id="TIGR00420">
    <property type="entry name" value="trmU"/>
    <property type="match status" value="1"/>
</dbReference>
<dbReference type="PANTHER" id="PTHR11933:SF5">
    <property type="entry name" value="MITOCHONDRIAL TRNA-SPECIFIC 2-THIOURIDYLASE 1"/>
    <property type="match status" value="1"/>
</dbReference>
<dbReference type="PANTHER" id="PTHR11933">
    <property type="entry name" value="TRNA 5-METHYLAMINOMETHYL-2-THIOURIDYLATE -METHYLTRANSFERASE"/>
    <property type="match status" value="1"/>
</dbReference>
<dbReference type="Pfam" id="PF03054">
    <property type="entry name" value="tRNA_Me_trans"/>
    <property type="match status" value="1"/>
</dbReference>
<dbReference type="Pfam" id="PF20258">
    <property type="entry name" value="tRNA_Me_trans_C"/>
    <property type="match status" value="1"/>
</dbReference>
<dbReference type="Pfam" id="PF20259">
    <property type="entry name" value="tRNA_Me_trans_M"/>
    <property type="match status" value="1"/>
</dbReference>
<dbReference type="SUPFAM" id="SSF52402">
    <property type="entry name" value="Adenine nucleotide alpha hydrolases-like"/>
    <property type="match status" value="1"/>
</dbReference>
<reference key="1">
    <citation type="journal article" date="2006" name="PLoS Genet.">
        <title>Who ate whom? Adaptive Helicobacter genomic changes that accompanied a host jump from early humans to large felines.</title>
        <authorList>
            <person name="Eppinger M."/>
            <person name="Baar C."/>
            <person name="Linz B."/>
            <person name="Raddatz G."/>
            <person name="Lanz C."/>
            <person name="Keller H."/>
            <person name="Morelli G."/>
            <person name="Gressmann H."/>
            <person name="Achtman M."/>
            <person name="Schuster S.C."/>
        </authorList>
    </citation>
    <scope>NUCLEOTIDE SEQUENCE [LARGE SCALE GENOMIC DNA]</scope>
    <source>
        <strain>Sheeba</strain>
    </source>
</reference>
<name>MNMA_HELAH</name>